<sequence length="852" mass="97634">MTGASRRSARGRIKSSSLSPGSDEGSAYPPSIRRGKGKELVSIGAFKTNLKILVGLIILGIIVIYFVINRLVRHGLLFDESQKPRVITPFPAPKVMDLSMFQGEHKESLYWGTYRPHVYFGVRARTPLSLVAGLMWLGVKDEMYVMRHFCENSDDLSTFGWREHNGRDYGRQELVENDMVIETSFVKSKGDGLGYGGDWAVRIDVKNKGLNDDVKRSAHLFFYLADEGGNVLNLGQDGLDFQGSSLLVSGSREDVGDWQIHLKSQNQLETHYSGFKTPHIYNLSDLVQQNLALQARKFGRLQLSDTSEDSSNIYIFQISGRLPFTIDIPFISGIKGESSNVEKRLTSLTGLPLSDLLKKKHQEFDAKFNECFKLSEKHDSETLGVGRTAIANMLGGIGYFYGQSKIYVPKSTQPGSRDNFLLYWPAELYTAVPSRPFFPRGFLWDEGFHQLLIWRWDIRITLDIVGHWLDLLNIDGWIPREQILGAEALSKVPEEFVVQYPSNGNPPTLFLVIRDLIDAIRMEKFVASEKDEVLSFLERASVRLDAWFQWFNTSQKGKEIGSYFWHGRDNTTTQELNPKTLSSGLDDYPRASHPSEDERHVDLRCWMYLAADCMHSITELLGKEDKLSKENYNSTVKLLSNFNLLNQMHYDSDYGAYFDFGNHTEKVKLIWKEVIQENGQLSRQLVRKTFGKPKLKLVPHLGYVSFFPFMSRIIPPDSPILEKQLDLISNRSILWSDYGLVSLAKTSSMYMKRNTEHDAPYWRGPIWMNMNYMILSSLYHYSIVDGPYREKSKAIYTELRSNLIRNVVRNYYETGYIWEQYDQVKGTGKGTRLFTGWSALTLLIMSEDYPIF</sequence>
<gene>
    <name type="primary">GCS1</name>
    <name type="synonym">KNF</name>
    <name type="synonym">MUC</name>
    <name type="synonym">RSW</name>
    <name type="ordered locus">At1g67490</name>
    <name type="ORF">F12B7.4</name>
    <name type="ORF">T1F15.4</name>
</gene>
<name>GCS1_ARATH</name>
<protein>
    <recommendedName>
        <fullName>Mannosyl-oligosaccharide glucosidase GCS1</fullName>
        <ecNumber>3.2.1.106</ecNumber>
    </recommendedName>
    <alternativeName>
        <fullName>Alpha-glucosidase 1</fullName>
        <shortName>Glucosidase 1</shortName>
    </alternativeName>
    <alternativeName>
        <fullName>Protein KNOPF</fullName>
    </alternativeName>
    <alternativeName>
        <fullName>Protein MUNCHKIN</fullName>
    </alternativeName>
</protein>
<keyword id="KW-0025">Alternative splicing</keyword>
<keyword id="KW-0256">Endoplasmic reticulum</keyword>
<keyword id="KW-0325">Glycoprotein</keyword>
<keyword id="KW-0326">Glycosidase</keyword>
<keyword id="KW-0378">Hydrolase</keyword>
<keyword id="KW-0472">Membrane</keyword>
<keyword id="KW-1185">Reference proteome</keyword>
<keyword id="KW-0735">Signal-anchor</keyword>
<keyword id="KW-0812">Transmembrane</keyword>
<keyword id="KW-1133">Transmembrane helix</keyword>
<accession>F4HTM3</accession>
<accession>F4HTM2</accession>
<accession>O64796</accession>
<accession>Q8GWC8</accession>
<accession>Q940D4</accession>
<accession>Q9C5B4</accession>
<accession>Q9CAG7</accession>
<organism>
    <name type="scientific">Arabidopsis thaliana</name>
    <name type="common">Mouse-ear cress</name>
    <dbReference type="NCBI Taxonomy" id="3702"/>
    <lineage>
        <taxon>Eukaryota</taxon>
        <taxon>Viridiplantae</taxon>
        <taxon>Streptophyta</taxon>
        <taxon>Embryophyta</taxon>
        <taxon>Tracheophyta</taxon>
        <taxon>Spermatophyta</taxon>
        <taxon>Magnoliopsida</taxon>
        <taxon>eudicotyledons</taxon>
        <taxon>Gunneridae</taxon>
        <taxon>Pentapetalae</taxon>
        <taxon>rosids</taxon>
        <taxon>malvids</taxon>
        <taxon>Brassicales</taxon>
        <taxon>Brassicaceae</taxon>
        <taxon>Camelineae</taxon>
        <taxon>Arabidopsis</taxon>
    </lineage>
</organism>
<feature type="chain" id="PRO_0000420920" description="Mannosyl-oligosaccharide glucosidase GCS1">
    <location>
        <begin position="1"/>
        <end position="852"/>
    </location>
</feature>
<feature type="topological domain" description="Cytoplasmic" evidence="2">
    <location>
        <begin position="1"/>
        <end position="51"/>
    </location>
</feature>
<feature type="transmembrane region" description="Helical; Signal-anchor for type II membrane protein" evidence="2">
    <location>
        <begin position="52"/>
        <end position="72"/>
    </location>
</feature>
<feature type="topological domain" description="Lumenal" evidence="2">
    <location>
        <begin position="73"/>
        <end position="852"/>
    </location>
</feature>
<feature type="region of interest" description="Disordered" evidence="3">
    <location>
        <begin position="1"/>
        <end position="31"/>
    </location>
</feature>
<feature type="region of interest" description="Required for endoplasmic reticulum targeting">
    <location>
        <begin position="91"/>
        <end position="150"/>
    </location>
</feature>
<feature type="region of interest" description="Disordered" evidence="3">
    <location>
        <begin position="574"/>
        <end position="593"/>
    </location>
</feature>
<feature type="short sequence motif" description="Endoplasmic reticulum targeting">
    <location>
        <begin position="6"/>
        <end position="12"/>
    </location>
</feature>
<feature type="compositionally biased region" description="Low complexity" evidence="3">
    <location>
        <begin position="15"/>
        <end position="26"/>
    </location>
</feature>
<feature type="compositionally biased region" description="Polar residues" evidence="3">
    <location>
        <begin position="574"/>
        <end position="583"/>
    </location>
</feature>
<feature type="active site" description="Proton donor" evidence="1">
    <location>
        <position position="586"/>
    </location>
</feature>
<feature type="active site" description="Proton acceptor" evidence="1">
    <location>
        <position position="819"/>
    </location>
</feature>
<feature type="glycosylation site" description="N-linked (GlcNAc...) asparagine" evidence="2">
    <location>
        <position position="282"/>
    </location>
</feature>
<feature type="glycosylation site" description="N-linked (GlcNAc...) asparagine" evidence="2">
    <location>
        <position position="552"/>
    </location>
</feature>
<feature type="glycosylation site" description="N-linked (GlcNAc...) asparagine" evidence="2">
    <location>
        <position position="570"/>
    </location>
</feature>
<feature type="glycosylation site" description="N-linked (GlcNAc...) asparagine" evidence="2">
    <location>
        <position position="633"/>
    </location>
</feature>
<feature type="glycosylation site" description="N-linked (GlcNAc...) asparagine" evidence="2">
    <location>
        <position position="662"/>
    </location>
</feature>
<feature type="glycosylation site" description="N-linked (GlcNAc...) asparagine" evidence="2">
    <location>
        <position position="730"/>
    </location>
</feature>
<feature type="splice variant" id="VSP_044957" description="In isoform 2." evidence="9">
    <location>
        <begin position="126"/>
        <end position="209"/>
    </location>
</feature>
<feature type="mutagenesis site" description="Abnormal subcellular location in the Golgi apparatus." evidence="8">
    <location>
        <begin position="1"/>
        <end position="13"/>
    </location>
</feature>
<feature type="mutagenesis site" description="Abnormal subcellular location in the Golgi apparatus." evidence="8">
    <original>RRSARGR</original>
    <variation>AASAAGA</variation>
    <variation>LLSALGL</variation>
    <location>
        <begin position="6"/>
        <end position="12"/>
    </location>
</feature>
<feature type="mutagenesis site" description="In knf-101/muc; semi-dwarf plants with abnormal cells shapes and altered epidermal cells arrangements, as well as short and hairy roots." evidence="7">
    <original>G</original>
    <variation>D</variation>
    <location>
        <position position="504"/>
    </location>
</feature>
<feature type="sequence conflict" description="In Ref. 1; CAC34725." evidence="9" ref="1">
    <original>K</original>
    <variation>N</variation>
    <location>
        <position position="373"/>
    </location>
</feature>
<feature type="sequence conflict" description="In Ref. 2; AAL17718." evidence="9" ref="2">
    <original>E</original>
    <variation>Q</variation>
    <location>
        <position position="446"/>
    </location>
</feature>
<feature type="sequence conflict" description="In Ref. 5; BAC43508." evidence="9" ref="5">
    <original>K</original>
    <variation>R</variation>
    <location>
        <position position="530"/>
    </location>
</feature>
<feature type="sequence conflict" description="In Ref. 1; CAC34725." evidence="9" ref="1">
    <original>L</original>
    <variation>R</variation>
    <location>
        <position position="609"/>
    </location>
</feature>
<feature type="sequence conflict" description="In Ref. 1; CAC34725." evidence="9" ref="1">
    <original>V</original>
    <variation>A</variation>
    <location>
        <position position="636"/>
    </location>
</feature>
<feature type="sequence conflict" description="In Ref. 1; CAC34725." evidence="9" ref="1">
    <original>D</original>
    <variation>N</variation>
    <location>
        <position position="726"/>
    </location>
</feature>
<feature type="sequence conflict" description="In Ref. 5; BAC43508." evidence="9" ref="5">
    <original>L</original>
    <variation>Q</variation>
    <location>
        <position position="740"/>
    </location>
</feature>
<proteinExistence type="evidence at protein level"/>
<dbReference type="EC" id="3.2.1.106"/>
<dbReference type="EMBL" id="AJ278990">
    <property type="protein sequence ID" value="CAC34725.1"/>
    <property type="molecule type" value="Genomic_DNA"/>
</dbReference>
<dbReference type="EMBL" id="AY055858">
    <property type="protein sequence ID" value="AAL17718.1"/>
    <property type="molecule type" value="mRNA"/>
</dbReference>
<dbReference type="EMBL" id="AC004393">
    <property type="protein sequence ID" value="AAC18786.1"/>
    <property type="status" value="ALT_SEQ"/>
    <property type="molecule type" value="Genomic_DNA"/>
</dbReference>
<dbReference type="EMBL" id="AC011020">
    <property type="protein sequence ID" value="AAG52297.1"/>
    <property type="status" value="ALT_SEQ"/>
    <property type="molecule type" value="Genomic_DNA"/>
</dbReference>
<dbReference type="EMBL" id="CP002684">
    <property type="protein sequence ID" value="AEE34653.1"/>
    <property type="molecule type" value="Genomic_DNA"/>
</dbReference>
<dbReference type="EMBL" id="CP002684">
    <property type="protein sequence ID" value="AEE34654.1"/>
    <property type="molecule type" value="Genomic_DNA"/>
</dbReference>
<dbReference type="EMBL" id="AK118927">
    <property type="protein sequence ID" value="BAC43508.1"/>
    <property type="molecule type" value="mRNA"/>
</dbReference>
<dbReference type="PIR" id="C96698">
    <property type="entry name" value="C96698"/>
</dbReference>
<dbReference type="PIR" id="T02156">
    <property type="entry name" value="T02156"/>
</dbReference>
<dbReference type="RefSeq" id="NP_001031247.1">
    <molecule id="F4HTM3-2"/>
    <property type="nucleotide sequence ID" value="NM_001036170.1"/>
</dbReference>
<dbReference type="RefSeq" id="NP_176916.2">
    <molecule id="F4HTM3-1"/>
    <property type="nucleotide sequence ID" value="NM_105416.5"/>
</dbReference>
<dbReference type="SMR" id="F4HTM3"/>
<dbReference type="FunCoup" id="F4HTM3">
    <property type="interactions" value="4113"/>
</dbReference>
<dbReference type="STRING" id="3702.F4HTM3"/>
<dbReference type="CAZy" id="GH63">
    <property type="family name" value="Glycoside Hydrolase Family 63"/>
</dbReference>
<dbReference type="GlyCosmos" id="F4HTM3">
    <property type="glycosylation" value="6 sites, No reported glycans"/>
</dbReference>
<dbReference type="GlyGen" id="F4HTM3">
    <property type="glycosylation" value="6 sites"/>
</dbReference>
<dbReference type="iPTMnet" id="F4HTM3"/>
<dbReference type="PaxDb" id="3702-AT1G67490.1"/>
<dbReference type="ProteomicsDB" id="222177">
    <molecule id="F4HTM3-1"/>
</dbReference>
<dbReference type="EnsemblPlants" id="AT1G67490.1">
    <molecule id="F4HTM3-1"/>
    <property type="protein sequence ID" value="AT1G67490.1"/>
    <property type="gene ID" value="AT1G67490"/>
</dbReference>
<dbReference type="EnsemblPlants" id="AT1G67490.2">
    <molecule id="F4HTM3-2"/>
    <property type="protein sequence ID" value="AT1G67490.2"/>
    <property type="gene ID" value="AT1G67490"/>
</dbReference>
<dbReference type="GeneID" id="843070"/>
<dbReference type="Gramene" id="AT1G67490.1">
    <molecule id="F4HTM3-1"/>
    <property type="protein sequence ID" value="AT1G67490.1"/>
    <property type="gene ID" value="AT1G67490"/>
</dbReference>
<dbReference type="Gramene" id="AT1G67490.2">
    <molecule id="F4HTM3-2"/>
    <property type="protein sequence ID" value="AT1G67490.2"/>
    <property type="gene ID" value="AT1G67490"/>
</dbReference>
<dbReference type="KEGG" id="ath:AT1G67490"/>
<dbReference type="Araport" id="AT1G67490"/>
<dbReference type="TAIR" id="AT1G67490">
    <property type="gene designation" value="GCS1"/>
</dbReference>
<dbReference type="eggNOG" id="KOG2161">
    <property type="taxonomic scope" value="Eukaryota"/>
</dbReference>
<dbReference type="HOGENOM" id="CLU_007380_1_0_1"/>
<dbReference type="InParanoid" id="F4HTM3"/>
<dbReference type="OMA" id="FNWYNTT"/>
<dbReference type="BRENDA" id="3.2.1.106">
    <property type="organism ID" value="399"/>
</dbReference>
<dbReference type="UniPathway" id="UPA00280"/>
<dbReference type="PRO" id="PR:F4HTM3"/>
<dbReference type="Proteomes" id="UP000006548">
    <property type="component" value="Chromosome 1"/>
</dbReference>
<dbReference type="ExpressionAtlas" id="F4HTM3">
    <property type="expression patterns" value="baseline and differential"/>
</dbReference>
<dbReference type="GO" id="GO:0005783">
    <property type="term" value="C:endoplasmic reticulum"/>
    <property type="evidence" value="ECO:0000314"/>
    <property type="project" value="TAIR"/>
</dbReference>
<dbReference type="GO" id="GO:0005789">
    <property type="term" value="C:endoplasmic reticulum membrane"/>
    <property type="evidence" value="ECO:0007669"/>
    <property type="project" value="UniProtKB-SubCell"/>
</dbReference>
<dbReference type="GO" id="GO:0005739">
    <property type="term" value="C:mitochondrion"/>
    <property type="evidence" value="ECO:0007005"/>
    <property type="project" value="TAIR"/>
</dbReference>
<dbReference type="GO" id="GO:0004558">
    <property type="term" value="F:alpha-1,4-glucosidase activity"/>
    <property type="evidence" value="ECO:0000314"/>
    <property type="project" value="TAIR"/>
</dbReference>
<dbReference type="GO" id="GO:0004573">
    <property type="term" value="F:Glc3Man9GlcNAc2 oligosaccharide glucosidase activity"/>
    <property type="evidence" value="ECO:0007669"/>
    <property type="project" value="UniProtKB-EC"/>
</dbReference>
<dbReference type="GO" id="GO:0009913">
    <property type="term" value="P:epidermal cell differentiation"/>
    <property type="evidence" value="ECO:0000315"/>
    <property type="project" value="TAIR"/>
</dbReference>
<dbReference type="GO" id="GO:0009311">
    <property type="term" value="P:oligosaccharide metabolic process"/>
    <property type="evidence" value="ECO:0007669"/>
    <property type="project" value="InterPro"/>
</dbReference>
<dbReference type="GO" id="GO:0006487">
    <property type="term" value="P:protein N-linked glycosylation"/>
    <property type="evidence" value="ECO:0000314"/>
    <property type="project" value="UniProtKB"/>
</dbReference>
<dbReference type="GO" id="GO:0010053">
    <property type="term" value="P:root epidermal cell differentiation"/>
    <property type="evidence" value="ECO:0000315"/>
    <property type="project" value="TAIR"/>
</dbReference>
<dbReference type="FunFam" id="1.50.10.10:FF:000009">
    <property type="entry name" value="mannosyl-oligosaccharide glucosidase"/>
    <property type="match status" value="1"/>
</dbReference>
<dbReference type="FunFam" id="2.70.98.110:FF:000002">
    <property type="entry name" value="Mannosyl-oligosaccharide glucosidase GCS1"/>
    <property type="match status" value="1"/>
</dbReference>
<dbReference type="Gene3D" id="1.50.10.10">
    <property type="match status" value="1"/>
</dbReference>
<dbReference type="Gene3D" id="2.70.98.110">
    <property type="entry name" value="Glycosyl hydrolase family 63, N-terminal domain"/>
    <property type="match status" value="1"/>
</dbReference>
<dbReference type="InterPro" id="IPR008928">
    <property type="entry name" value="6-hairpin_glycosidase_sf"/>
</dbReference>
<dbReference type="InterPro" id="IPR012341">
    <property type="entry name" value="6hp_glycosidase-like_sf"/>
</dbReference>
<dbReference type="InterPro" id="IPR031335">
    <property type="entry name" value="Glyco_hydro_63_C"/>
</dbReference>
<dbReference type="InterPro" id="IPR031631">
    <property type="entry name" value="Glyco_hydro_63N"/>
</dbReference>
<dbReference type="InterPro" id="IPR038518">
    <property type="entry name" value="Glyco_hydro_63N_sf"/>
</dbReference>
<dbReference type="InterPro" id="IPR004888">
    <property type="entry name" value="Glycoside_hydrolase_63"/>
</dbReference>
<dbReference type="PANTHER" id="PTHR10412">
    <property type="entry name" value="MANNOSYL-OLIGOSACCHARIDE GLUCOSIDASE"/>
    <property type="match status" value="1"/>
</dbReference>
<dbReference type="PANTHER" id="PTHR10412:SF20">
    <property type="entry name" value="MANNOSYL-OLIGOSACCHARIDE GLUCOSIDASE GCS1"/>
    <property type="match status" value="1"/>
</dbReference>
<dbReference type="Pfam" id="PF03200">
    <property type="entry name" value="Glyco_hydro_63"/>
    <property type="match status" value="1"/>
</dbReference>
<dbReference type="Pfam" id="PF16923">
    <property type="entry name" value="Glyco_hydro_63N"/>
    <property type="match status" value="1"/>
</dbReference>
<dbReference type="SUPFAM" id="SSF48208">
    <property type="entry name" value="Six-hairpin glycosidases"/>
    <property type="match status" value="1"/>
</dbReference>
<evidence type="ECO:0000250" key="1">
    <source>
        <dbReference type="UniProtKB" id="Q80UM7"/>
    </source>
</evidence>
<evidence type="ECO:0000255" key="2"/>
<evidence type="ECO:0000256" key="3">
    <source>
        <dbReference type="SAM" id="MobiDB-lite"/>
    </source>
</evidence>
<evidence type="ECO:0000269" key="4">
    <source>
    </source>
</evidence>
<evidence type="ECO:0000269" key="5">
    <source>
    </source>
</evidence>
<evidence type="ECO:0000269" key="6">
    <source>
    </source>
</evidence>
<evidence type="ECO:0000269" key="7">
    <source>
    </source>
</evidence>
<evidence type="ECO:0000269" key="8">
    <source>
    </source>
</evidence>
<evidence type="ECO:0000305" key="9"/>
<reference key="1">
    <citation type="journal article" date="2001" name="EMBO J.">
        <title>Arabidopsis glucosidase I mutants reveal a critical role of N-glycan trimming in seed development.</title>
        <authorList>
            <person name="Boisson M."/>
            <person name="Gomord V."/>
            <person name="Audran C."/>
            <person name="Berger N."/>
            <person name="Dubreucq B."/>
            <person name="Granier F."/>
            <person name="Lerouge P."/>
            <person name="Faye L."/>
            <person name="Caboche M."/>
            <person name="Lepiniec L."/>
        </authorList>
    </citation>
    <scope>NUCLEOTIDE SEQUENCE [GENOMIC DNA]</scope>
    <scope>FUNCTION</scope>
    <scope>DISRUPTION PHENOTYPE</scope>
    <scope>TISSUE SPECIFICITY</scope>
    <source>
        <strain>cv. Wassilewskija</strain>
    </source>
</reference>
<reference key="2">
    <citation type="journal article" date="2002" name="J. Cell Biol.">
        <title>Alpha-glucosidase I is required for cellulose biosynthesis and morphogenesis in Arabidopsis.</title>
        <authorList>
            <person name="Gillmor C.S."/>
            <person name="Poindexter P."/>
            <person name="Lorieau J."/>
            <person name="Palcic M.M."/>
            <person name="Somerville C."/>
        </authorList>
    </citation>
    <scope>NUCLEOTIDE SEQUENCE [MRNA]</scope>
    <scope>FUNCTION</scope>
    <scope>DISRUPTION PHENOTYPE</scope>
    <scope>TISSUE SPECIFICITY</scope>
    <source>
        <strain>cv. Columbia</strain>
    </source>
</reference>
<reference key="3">
    <citation type="journal article" date="2000" name="Nature">
        <title>Sequence and analysis of chromosome 1 of the plant Arabidopsis thaliana.</title>
        <authorList>
            <person name="Theologis A."/>
            <person name="Ecker J.R."/>
            <person name="Palm C.J."/>
            <person name="Federspiel N.A."/>
            <person name="Kaul S."/>
            <person name="White O."/>
            <person name="Alonso J."/>
            <person name="Altafi H."/>
            <person name="Araujo R."/>
            <person name="Bowman C.L."/>
            <person name="Brooks S.Y."/>
            <person name="Buehler E."/>
            <person name="Chan A."/>
            <person name="Chao Q."/>
            <person name="Chen H."/>
            <person name="Cheuk R.F."/>
            <person name="Chin C.W."/>
            <person name="Chung M.K."/>
            <person name="Conn L."/>
            <person name="Conway A.B."/>
            <person name="Conway A.R."/>
            <person name="Creasy T.H."/>
            <person name="Dewar K."/>
            <person name="Dunn P."/>
            <person name="Etgu P."/>
            <person name="Feldblyum T.V."/>
            <person name="Feng J.-D."/>
            <person name="Fong B."/>
            <person name="Fujii C.Y."/>
            <person name="Gill J.E."/>
            <person name="Goldsmith A.D."/>
            <person name="Haas B."/>
            <person name="Hansen N.F."/>
            <person name="Hughes B."/>
            <person name="Huizar L."/>
            <person name="Hunter J.L."/>
            <person name="Jenkins J."/>
            <person name="Johnson-Hopson C."/>
            <person name="Khan S."/>
            <person name="Khaykin E."/>
            <person name="Kim C.J."/>
            <person name="Koo H.L."/>
            <person name="Kremenetskaia I."/>
            <person name="Kurtz D.B."/>
            <person name="Kwan A."/>
            <person name="Lam B."/>
            <person name="Langin-Hooper S."/>
            <person name="Lee A."/>
            <person name="Lee J.M."/>
            <person name="Lenz C.A."/>
            <person name="Li J.H."/>
            <person name="Li Y.-P."/>
            <person name="Lin X."/>
            <person name="Liu S.X."/>
            <person name="Liu Z.A."/>
            <person name="Luros J.S."/>
            <person name="Maiti R."/>
            <person name="Marziali A."/>
            <person name="Militscher J."/>
            <person name="Miranda M."/>
            <person name="Nguyen M."/>
            <person name="Nierman W.C."/>
            <person name="Osborne B.I."/>
            <person name="Pai G."/>
            <person name="Peterson J."/>
            <person name="Pham P.K."/>
            <person name="Rizzo M."/>
            <person name="Rooney T."/>
            <person name="Rowley D."/>
            <person name="Sakano H."/>
            <person name="Salzberg S.L."/>
            <person name="Schwartz J.R."/>
            <person name="Shinn P."/>
            <person name="Southwick A.M."/>
            <person name="Sun H."/>
            <person name="Tallon L.J."/>
            <person name="Tambunga G."/>
            <person name="Toriumi M.J."/>
            <person name="Town C.D."/>
            <person name="Utterback T."/>
            <person name="Van Aken S."/>
            <person name="Vaysberg M."/>
            <person name="Vysotskaia V.S."/>
            <person name="Walker M."/>
            <person name="Wu D."/>
            <person name="Yu G."/>
            <person name="Fraser C.M."/>
            <person name="Venter J.C."/>
            <person name="Davis R.W."/>
        </authorList>
    </citation>
    <scope>NUCLEOTIDE SEQUENCE [LARGE SCALE GENOMIC DNA]</scope>
    <source>
        <strain>cv. Columbia</strain>
    </source>
</reference>
<reference key="4">
    <citation type="journal article" date="2017" name="Plant J.">
        <title>Araport11: a complete reannotation of the Arabidopsis thaliana reference genome.</title>
        <authorList>
            <person name="Cheng C.Y."/>
            <person name="Krishnakumar V."/>
            <person name="Chan A.P."/>
            <person name="Thibaud-Nissen F."/>
            <person name="Schobel S."/>
            <person name="Town C.D."/>
        </authorList>
    </citation>
    <scope>GENOME REANNOTATION</scope>
    <source>
        <strain>cv. Columbia</strain>
    </source>
</reference>
<reference key="5">
    <citation type="journal article" date="2002" name="Science">
        <title>Functional annotation of a full-length Arabidopsis cDNA collection.</title>
        <authorList>
            <person name="Seki M."/>
            <person name="Narusaka M."/>
            <person name="Kamiya A."/>
            <person name="Ishida J."/>
            <person name="Satou M."/>
            <person name="Sakurai T."/>
            <person name="Nakajima M."/>
            <person name="Enju A."/>
            <person name="Akiyama K."/>
            <person name="Oono Y."/>
            <person name="Muramatsu M."/>
            <person name="Hayashizaki Y."/>
            <person name="Kawai J."/>
            <person name="Carninci P."/>
            <person name="Itoh M."/>
            <person name="Ishii Y."/>
            <person name="Arakawa T."/>
            <person name="Shibata K."/>
            <person name="Shinagawa A."/>
            <person name="Shinozaki K."/>
        </authorList>
    </citation>
    <scope>NUCLEOTIDE SEQUENCE [LARGE SCALE MRNA]</scope>
    <source>
        <strain>cv. Columbia</strain>
    </source>
</reference>
<reference key="6">
    <citation type="journal article" date="2006" name="Plant Cell">
        <title>Plant N-glycan processing enzymes employ different targeting mechanisms for their spatial arrangement along the secretory pathway.</title>
        <authorList>
            <person name="Saint-Jore-Dupas C."/>
            <person name="Nebenfuehr A."/>
            <person name="Boulaflous A."/>
            <person name="Follet-Gueye M.-L."/>
            <person name="Plasson C."/>
            <person name="Hawes C."/>
            <person name="Driouich A."/>
            <person name="Faye L."/>
            <person name="Gomord V."/>
        </authorList>
    </citation>
    <scope>SUBCELLULAR LOCATION</scope>
    <scope>TOPOLOGY</scope>
</reference>
<reference key="7">
    <citation type="journal article" date="2008" name="FEBS Lett.">
        <title>A novel mutation in KNOPF uncovers the role of alpha-glucosidase I during post-embryonic development in Arabidopsis thaliana.</title>
        <authorList>
            <person name="Furumizu C."/>
            <person name="Komeda Y."/>
        </authorList>
    </citation>
    <scope>FUNCTION</scope>
    <scope>MUTAGENESIS OF GLY-504</scope>
    <source>
        <strain>cv. Columbia</strain>
    </source>
</reference>
<reference key="8">
    <citation type="journal article" date="2009" name="BMC Plant Biol.">
        <title>Cytosolic N-terminal arginine-based signals together with a luminal signal target a type II membrane protein to the plant ER.</title>
        <authorList>
            <person name="Boulaflous A."/>
            <person name="Saint-Jore-Dupas C."/>
            <person name="Herranz-Gordo M.-C."/>
            <person name="Pagny-Salehabadi S."/>
            <person name="Plasson C."/>
            <person name="Garidou F."/>
            <person name="Kiefer-Meyer M.-C."/>
            <person name="Ritzenthaler C."/>
            <person name="Faye L."/>
            <person name="Gomord V."/>
        </authorList>
    </citation>
    <scope>SUBCELLULAR LOCATION</scope>
    <scope>TOPOLOGY</scope>
    <scope>MUTAGENESIS OF 1-MET--ILE-13 AND 6-ARG--ARG-12</scope>
</reference>
<comment type="function">
    <text evidence="4 5 7">Cleaves the distal alpha 1,2-linked glucose residue from the Glc(3)Man(9)GlcNAc(2) oligosaccharide precursor. Required for the accumulation of seed storage proteins, the formation of protein bodies, cell differentiation, cellulose biosynthesis and organization (in cell walls), cell shape determination and organization (e.g. epidermal cells), and embryo development. Involved in root development.</text>
</comment>
<comment type="catalytic activity">
    <reaction>
        <text>N(4)-(alpha-D-Glc-(1-&gt;2)-alpha-D-Glc-(1-&gt;3)-alpha-D-Glc-(1-&gt;3)-alpha-D-Man-(1-&gt;2)-alpha-D-Man-(1-&gt;2)-alpha-D-Man-(1-&gt;3)-[alpha-D-Man-(1-&gt;2)-alpha-D-Man-(1-&gt;3)-[alpha-D-Man-(1-&gt;2)-alpha-D-Man-(1-&gt;6)]-alpha-D-Man-(1-&gt;6)]-beta-D-Man-(1-&gt;4)-beta-D-GlcNAc-(1-&gt;4)-beta-D-GlcNAc)-L-asparaginyl-[protein] + H2O = N(4)-(alpha-D-Glc-(1-&gt;3)-alpha-D-Glc-(1-&gt;3)-alpha-D-Man-(1-&gt;2)-alpha-D-Man-(1-&gt;2)-alpha-D-Man-(1-&gt;3)-[alpha-D-Man-(1-&gt;2)-alpha-D-Man-(1-&gt;3)-[alpha-D-Man-(1-&gt;2)-alpha-D-Man-(1-&gt;6)]-alpha-D-Man-(1-&gt;6)]-beta-D-Man-(1-&gt;4)-beta-D-GlcNAc-(1-&gt;4)-beta-D-GlcNAc)-L-asparaginyl-[protein] + beta-D-glucose</text>
        <dbReference type="Rhea" id="RHEA:55988"/>
        <dbReference type="Rhea" id="RHEA-COMP:12806"/>
        <dbReference type="Rhea" id="RHEA-COMP:14355"/>
        <dbReference type="ChEBI" id="CHEBI:15377"/>
        <dbReference type="ChEBI" id="CHEBI:15903"/>
        <dbReference type="ChEBI" id="CHEBI:59082"/>
        <dbReference type="ChEBI" id="CHEBI:132537"/>
        <dbReference type="EC" id="3.2.1.106"/>
    </reaction>
</comment>
<comment type="pathway">
    <text>Glycan metabolism; N-glycan degradation.</text>
</comment>
<comment type="subcellular location">
    <subcellularLocation>
        <location evidence="6 8">Endoplasmic reticulum membrane</location>
        <topology evidence="6 8">Single-pass type II membrane protein</topology>
    </subcellularLocation>
</comment>
<comment type="alternative products">
    <event type="alternative splicing"/>
    <isoform>
        <id>F4HTM3-1</id>
        <name>1</name>
        <sequence type="displayed"/>
    </isoform>
    <isoform>
        <id>F4HTM3-2</id>
        <name>2</name>
        <sequence type="described" ref="VSP_044957"/>
    </isoform>
</comment>
<comment type="tissue specificity">
    <text evidence="4 5">Constitutively expressed in roots, stems, leaves, flowers and siliques.</text>
</comment>
<comment type="disruption phenotype">
    <text evidence="4 5">Embryonic lethal. Impaired glucosidase activity leading to a strongly reduced cellulose content. Abnormal shrunken seeds with embryos arrested at the heart stage. Low levels of storage proteins in seeds accompanied by a loss of protein bodies, abnormal cell enlargement and occasional cell wall disruptions.</text>
</comment>
<comment type="similarity">
    <text evidence="9">Belongs to the glycosyl hydrolase 63 family.</text>
</comment>
<comment type="sequence caution" evidence="9">
    <conflict type="erroneous gene model prediction">
        <sequence resource="EMBL-CDS" id="AAC18786"/>
    </conflict>
</comment>
<comment type="sequence caution" evidence="9">
    <conflict type="erroneous gene model prediction">
        <sequence resource="EMBL-CDS" id="AAG52297"/>
    </conflict>
</comment>